<gene>
    <name evidence="1" type="primary">glyQ</name>
    <name type="ordered locus">Smlt4635</name>
</gene>
<reference key="1">
    <citation type="journal article" date="2008" name="Genome Biol.">
        <title>The complete genome, comparative and functional analysis of Stenotrophomonas maltophilia reveals an organism heavily shielded by drug resistance determinants.</title>
        <authorList>
            <person name="Crossman L.C."/>
            <person name="Gould V.C."/>
            <person name="Dow J.M."/>
            <person name="Vernikos G.S."/>
            <person name="Okazaki A."/>
            <person name="Sebaihia M."/>
            <person name="Saunders D."/>
            <person name="Arrowsmith C."/>
            <person name="Carver T."/>
            <person name="Peters N."/>
            <person name="Adlem E."/>
            <person name="Kerhornou A."/>
            <person name="Lord A."/>
            <person name="Murphy L."/>
            <person name="Seeger K."/>
            <person name="Squares R."/>
            <person name="Rutter S."/>
            <person name="Quail M.A."/>
            <person name="Rajandream M.A."/>
            <person name="Harris D."/>
            <person name="Churcher C."/>
            <person name="Bentley S.D."/>
            <person name="Parkhill J."/>
            <person name="Thomson N.R."/>
            <person name="Avison M.B."/>
        </authorList>
    </citation>
    <scope>NUCLEOTIDE SEQUENCE [LARGE SCALE GENOMIC DNA]</scope>
    <source>
        <strain>K279a</strain>
    </source>
</reference>
<comment type="catalytic activity">
    <reaction evidence="1">
        <text>tRNA(Gly) + glycine + ATP = glycyl-tRNA(Gly) + AMP + diphosphate</text>
        <dbReference type="Rhea" id="RHEA:16013"/>
        <dbReference type="Rhea" id="RHEA-COMP:9664"/>
        <dbReference type="Rhea" id="RHEA-COMP:9683"/>
        <dbReference type="ChEBI" id="CHEBI:30616"/>
        <dbReference type="ChEBI" id="CHEBI:33019"/>
        <dbReference type="ChEBI" id="CHEBI:57305"/>
        <dbReference type="ChEBI" id="CHEBI:78442"/>
        <dbReference type="ChEBI" id="CHEBI:78522"/>
        <dbReference type="ChEBI" id="CHEBI:456215"/>
        <dbReference type="EC" id="6.1.1.14"/>
    </reaction>
</comment>
<comment type="subunit">
    <text evidence="1">Tetramer of two alpha and two beta subunits.</text>
</comment>
<comment type="subcellular location">
    <subcellularLocation>
        <location evidence="1">Cytoplasm</location>
    </subcellularLocation>
</comment>
<comment type="similarity">
    <text evidence="1">Belongs to the class-II aminoacyl-tRNA synthetase family.</text>
</comment>
<dbReference type="EC" id="6.1.1.14" evidence="1"/>
<dbReference type="EMBL" id="AM743169">
    <property type="protein sequence ID" value="CAQ47988.1"/>
    <property type="molecule type" value="Genomic_DNA"/>
</dbReference>
<dbReference type="RefSeq" id="WP_012481649.1">
    <property type="nucleotide sequence ID" value="NC_010943.1"/>
</dbReference>
<dbReference type="SMR" id="B2FP48"/>
<dbReference type="EnsemblBacteria" id="CAQ47988">
    <property type="protein sequence ID" value="CAQ47988"/>
    <property type="gene ID" value="Smlt4635"/>
</dbReference>
<dbReference type="KEGG" id="sml:Smlt4635"/>
<dbReference type="PATRIC" id="fig|522373.3.peg.4369"/>
<dbReference type="eggNOG" id="COG0752">
    <property type="taxonomic scope" value="Bacteria"/>
</dbReference>
<dbReference type="HOGENOM" id="CLU_057066_1_0_6"/>
<dbReference type="Proteomes" id="UP000008840">
    <property type="component" value="Chromosome"/>
</dbReference>
<dbReference type="GO" id="GO:0005829">
    <property type="term" value="C:cytosol"/>
    <property type="evidence" value="ECO:0007669"/>
    <property type="project" value="TreeGrafter"/>
</dbReference>
<dbReference type="GO" id="GO:0005524">
    <property type="term" value="F:ATP binding"/>
    <property type="evidence" value="ECO:0007669"/>
    <property type="project" value="UniProtKB-UniRule"/>
</dbReference>
<dbReference type="GO" id="GO:0004820">
    <property type="term" value="F:glycine-tRNA ligase activity"/>
    <property type="evidence" value="ECO:0007669"/>
    <property type="project" value="UniProtKB-UniRule"/>
</dbReference>
<dbReference type="GO" id="GO:0006426">
    <property type="term" value="P:glycyl-tRNA aminoacylation"/>
    <property type="evidence" value="ECO:0007669"/>
    <property type="project" value="UniProtKB-UniRule"/>
</dbReference>
<dbReference type="CDD" id="cd00733">
    <property type="entry name" value="GlyRS_alpha_core"/>
    <property type="match status" value="1"/>
</dbReference>
<dbReference type="FunFam" id="3.30.930.10:FF:000006">
    <property type="entry name" value="Glycine--tRNA ligase alpha subunit"/>
    <property type="match status" value="1"/>
</dbReference>
<dbReference type="Gene3D" id="3.30.930.10">
    <property type="entry name" value="Bira Bifunctional Protein, Domain 2"/>
    <property type="match status" value="1"/>
</dbReference>
<dbReference type="Gene3D" id="1.20.58.180">
    <property type="entry name" value="Class II aaRS and biotin synthetases, domain 2"/>
    <property type="match status" value="1"/>
</dbReference>
<dbReference type="HAMAP" id="MF_00254">
    <property type="entry name" value="Gly_tRNA_synth_alpha"/>
    <property type="match status" value="1"/>
</dbReference>
<dbReference type="InterPro" id="IPR045864">
    <property type="entry name" value="aa-tRNA-synth_II/BPL/LPL"/>
</dbReference>
<dbReference type="InterPro" id="IPR006194">
    <property type="entry name" value="Gly-tRNA-synth_heterodimer"/>
</dbReference>
<dbReference type="InterPro" id="IPR002310">
    <property type="entry name" value="Gly-tRNA_ligase_asu"/>
</dbReference>
<dbReference type="NCBIfam" id="TIGR00388">
    <property type="entry name" value="glyQ"/>
    <property type="match status" value="1"/>
</dbReference>
<dbReference type="NCBIfam" id="NF006827">
    <property type="entry name" value="PRK09348.1"/>
    <property type="match status" value="1"/>
</dbReference>
<dbReference type="PANTHER" id="PTHR30075:SF2">
    <property type="entry name" value="GLYCINE--TRNA LIGASE, CHLOROPLASTIC_MITOCHONDRIAL 2"/>
    <property type="match status" value="1"/>
</dbReference>
<dbReference type="PANTHER" id="PTHR30075">
    <property type="entry name" value="GLYCYL-TRNA SYNTHETASE"/>
    <property type="match status" value="1"/>
</dbReference>
<dbReference type="Pfam" id="PF02091">
    <property type="entry name" value="tRNA-synt_2e"/>
    <property type="match status" value="1"/>
</dbReference>
<dbReference type="PRINTS" id="PR01044">
    <property type="entry name" value="TRNASYNTHGA"/>
</dbReference>
<dbReference type="SUPFAM" id="SSF55681">
    <property type="entry name" value="Class II aaRS and biotin synthetases"/>
    <property type="match status" value="1"/>
</dbReference>
<dbReference type="PROSITE" id="PS50861">
    <property type="entry name" value="AA_TRNA_LIGASE_II_GLYAB"/>
    <property type="match status" value="1"/>
</dbReference>
<keyword id="KW-0030">Aminoacyl-tRNA synthetase</keyword>
<keyword id="KW-0067">ATP-binding</keyword>
<keyword id="KW-0963">Cytoplasm</keyword>
<keyword id="KW-0436">Ligase</keyword>
<keyword id="KW-0547">Nucleotide-binding</keyword>
<keyword id="KW-0648">Protein biosynthesis</keyword>
<keyword id="KW-1185">Reference proteome</keyword>
<evidence type="ECO:0000255" key="1">
    <source>
        <dbReference type="HAMAP-Rule" id="MF_00254"/>
    </source>
</evidence>
<organism>
    <name type="scientific">Stenotrophomonas maltophilia (strain K279a)</name>
    <dbReference type="NCBI Taxonomy" id="522373"/>
    <lineage>
        <taxon>Bacteria</taxon>
        <taxon>Pseudomonadati</taxon>
        <taxon>Pseudomonadota</taxon>
        <taxon>Gammaproteobacteria</taxon>
        <taxon>Lysobacterales</taxon>
        <taxon>Lysobacteraceae</taxon>
        <taxon>Stenotrophomonas</taxon>
        <taxon>Stenotrophomonas maltophilia group</taxon>
    </lineage>
</organism>
<protein>
    <recommendedName>
        <fullName evidence="1">Glycine--tRNA ligase alpha subunit</fullName>
        <ecNumber evidence="1">6.1.1.14</ecNumber>
    </recommendedName>
    <alternativeName>
        <fullName evidence="1">Glycyl-tRNA synthetase alpha subunit</fullName>
        <shortName evidence="1">GlyRS</shortName>
    </alternativeName>
</protein>
<proteinExistence type="inferred from homology"/>
<feature type="chain" id="PRO_1000101235" description="Glycine--tRNA ligase alpha subunit">
    <location>
        <begin position="1"/>
        <end position="303"/>
    </location>
</feature>
<name>SYGA_STRMK</name>
<sequence>MSATPTVPITFQGLIQTLNQFWAQQGCVLIQPLDLEVGAGTFHPATFLRAIGPEGWNAAYVQPSRRPTDGRYGENPNRLQRYYQYQVAMKPAPDNIQQLYLDSLKALGIDPLVHDLRFVEDNWESPTLGAWGLGWEVWLNGMEVTQFTYFQQAGGLECRPVLGEITYGLERLCMYLQNCDNVYDLIWTYGPDGQPVTYGDVYHQNEVEQSTYNFEYADVEEMFHRFDACEREAQKLVEVNLPLPAYEQVMKASHTFNLLDARRAISVTERQRYILRVRALAQAVARAYYEQREKLGFPGAKKA</sequence>
<accession>B2FP48</accession>